<reference key="1">
    <citation type="submission" date="2008-05" db="EMBL/GenBank/DDBJ databases">
        <title>Complete sequence of Shigella boydii serotype 18 strain BS512.</title>
        <authorList>
            <person name="Rasko D.A."/>
            <person name="Rosovitz M."/>
            <person name="Maurelli A.T."/>
            <person name="Myers G."/>
            <person name="Seshadri R."/>
            <person name="Cer R."/>
            <person name="Jiang L."/>
            <person name="Ravel J."/>
            <person name="Sebastian Y."/>
        </authorList>
    </citation>
    <scope>NUCLEOTIDE SEQUENCE [LARGE SCALE GENOMIC DNA]</scope>
    <source>
        <strain>CDC 3083-94 / BS512</strain>
    </source>
</reference>
<proteinExistence type="inferred from homology"/>
<keyword id="KW-0997">Cell inner membrane</keyword>
<keyword id="KW-1003">Cell membrane</keyword>
<keyword id="KW-0472">Membrane</keyword>
<keyword id="KW-1185">Reference proteome</keyword>
<keyword id="KW-0812">Transmembrane</keyword>
<keyword id="KW-1133">Transmembrane helix</keyword>
<evidence type="ECO:0000255" key="1">
    <source>
        <dbReference type="HAMAP-Rule" id="MF_00189"/>
    </source>
</evidence>
<comment type="function">
    <text evidence="1">Plays a role in cell envelope biogenesis, maintenance of cell envelope integrity and membrane homeostasis.</text>
</comment>
<comment type="subcellular location">
    <subcellularLocation>
        <location evidence="1">Cell inner membrane</location>
        <topology evidence="1">Multi-pass membrane protein</topology>
    </subcellularLocation>
</comment>
<comment type="similarity">
    <text evidence="1">Belongs to the YciB family.</text>
</comment>
<dbReference type="EMBL" id="CP001063">
    <property type="protein sequence ID" value="ACD08434.1"/>
    <property type="molecule type" value="Genomic_DNA"/>
</dbReference>
<dbReference type="RefSeq" id="WP_000808667.1">
    <property type="nucleotide sequence ID" value="NC_010658.1"/>
</dbReference>
<dbReference type="STRING" id="344609.SbBS512_E1423"/>
<dbReference type="KEGG" id="sbc:SbBS512_E1423"/>
<dbReference type="HOGENOM" id="CLU_089554_2_0_6"/>
<dbReference type="Proteomes" id="UP000001030">
    <property type="component" value="Chromosome"/>
</dbReference>
<dbReference type="GO" id="GO:0005886">
    <property type="term" value="C:plasma membrane"/>
    <property type="evidence" value="ECO:0007669"/>
    <property type="project" value="UniProtKB-SubCell"/>
</dbReference>
<dbReference type="HAMAP" id="MF_00189">
    <property type="entry name" value="YciB"/>
    <property type="match status" value="1"/>
</dbReference>
<dbReference type="InterPro" id="IPR006008">
    <property type="entry name" value="YciB"/>
</dbReference>
<dbReference type="NCBIfam" id="TIGR00997">
    <property type="entry name" value="ispZ"/>
    <property type="match status" value="1"/>
</dbReference>
<dbReference type="NCBIfam" id="NF001324">
    <property type="entry name" value="PRK00259.1-2"/>
    <property type="match status" value="1"/>
</dbReference>
<dbReference type="NCBIfam" id="NF001325">
    <property type="entry name" value="PRK00259.1-3"/>
    <property type="match status" value="1"/>
</dbReference>
<dbReference type="NCBIfam" id="NF001326">
    <property type="entry name" value="PRK00259.1-4"/>
    <property type="match status" value="1"/>
</dbReference>
<dbReference type="PANTHER" id="PTHR36917:SF1">
    <property type="entry name" value="INNER MEMBRANE-SPANNING PROTEIN YCIB"/>
    <property type="match status" value="1"/>
</dbReference>
<dbReference type="PANTHER" id="PTHR36917">
    <property type="entry name" value="INTRACELLULAR SEPTATION PROTEIN A-RELATED"/>
    <property type="match status" value="1"/>
</dbReference>
<dbReference type="Pfam" id="PF04279">
    <property type="entry name" value="IspA"/>
    <property type="match status" value="1"/>
</dbReference>
<organism>
    <name type="scientific">Shigella boydii serotype 18 (strain CDC 3083-94 / BS512)</name>
    <dbReference type="NCBI Taxonomy" id="344609"/>
    <lineage>
        <taxon>Bacteria</taxon>
        <taxon>Pseudomonadati</taxon>
        <taxon>Pseudomonadota</taxon>
        <taxon>Gammaproteobacteria</taxon>
        <taxon>Enterobacterales</taxon>
        <taxon>Enterobacteriaceae</taxon>
        <taxon>Shigella</taxon>
    </lineage>
</organism>
<name>YCIB_SHIB3</name>
<protein>
    <recommendedName>
        <fullName evidence="1">Inner membrane-spanning protein YciB</fullName>
    </recommendedName>
</protein>
<sequence>MKQFLDFLPLVVFFAFYKIYDIYAATAALIVATAIVLIYSWVRFRKVEKMALITFVLVVVFGGLTLFFHNDEFIKWKVTVIYALFAGALLVSQWVMKKPLIQRMLGKELTLPQPVWSKLNLAWAVFFILCGLANIYIAFWLPQNIWVNFKVFGLTALTLIFTLLSGIYIYRHMPQEDKS</sequence>
<feature type="chain" id="PRO_1000098899" description="Inner membrane-spanning protein YciB">
    <location>
        <begin position="1"/>
        <end position="179"/>
    </location>
</feature>
<feature type="transmembrane region" description="Helical" evidence="1">
    <location>
        <begin position="22"/>
        <end position="42"/>
    </location>
</feature>
<feature type="transmembrane region" description="Helical" evidence="1">
    <location>
        <begin position="50"/>
        <end position="70"/>
    </location>
</feature>
<feature type="transmembrane region" description="Helical" evidence="1">
    <location>
        <begin position="76"/>
        <end position="96"/>
    </location>
</feature>
<feature type="transmembrane region" description="Helical" evidence="1">
    <location>
        <begin position="121"/>
        <end position="141"/>
    </location>
</feature>
<feature type="transmembrane region" description="Helical" evidence="1">
    <location>
        <begin position="149"/>
        <end position="169"/>
    </location>
</feature>
<accession>B2TZZ9</accession>
<gene>
    <name evidence="1" type="primary">yciB</name>
    <name type="ordered locus">SbBS512_E1423</name>
</gene>